<reference key="1">
    <citation type="journal article" date="2008" name="Chem. Biol. Interact.">
        <title>Extending the Bacillus cereus group genomics to putative food-borne pathogens of different toxicity.</title>
        <authorList>
            <person name="Lapidus A."/>
            <person name="Goltsman E."/>
            <person name="Auger S."/>
            <person name="Galleron N."/>
            <person name="Segurens B."/>
            <person name="Dossat C."/>
            <person name="Land M.L."/>
            <person name="Broussolle V."/>
            <person name="Brillard J."/>
            <person name="Guinebretiere M.-H."/>
            <person name="Sanchis V."/>
            <person name="Nguen-the C."/>
            <person name="Lereclus D."/>
            <person name="Richardson P."/>
            <person name="Wincker P."/>
            <person name="Weissenbach J."/>
            <person name="Ehrlich S.D."/>
            <person name="Sorokin A."/>
        </authorList>
    </citation>
    <scope>NUCLEOTIDE SEQUENCE [LARGE SCALE GENOMIC DNA]</scope>
    <source>
        <strain>KBAB4</strain>
    </source>
</reference>
<proteinExistence type="inferred from homology"/>
<gene>
    <name evidence="1" type="primary">trpF</name>
    <name type="ordered locus">BcerKBAB4_1148</name>
</gene>
<dbReference type="EC" id="5.3.1.24" evidence="1"/>
<dbReference type="EMBL" id="CP000903">
    <property type="protein sequence ID" value="ABY42397.1"/>
    <property type="molecule type" value="Genomic_DNA"/>
</dbReference>
<dbReference type="RefSeq" id="WP_002186404.1">
    <property type="nucleotide sequence ID" value="NC_010184.1"/>
</dbReference>
<dbReference type="SMR" id="A9VJW1"/>
<dbReference type="KEGG" id="bwe:BcerKBAB4_1148"/>
<dbReference type="eggNOG" id="COG0135">
    <property type="taxonomic scope" value="Bacteria"/>
</dbReference>
<dbReference type="HOGENOM" id="CLU_076364_1_0_9"/>
<dbReference type="UniPathway" id="UPA00035">
    <property type="reaction ID" value="UER00042"/>
</dbReference>
<dbReference type="Proteomes" id="UP000002154">
    <property type="component" value="Chromosome"/>
</dbReference>
<dbReference type="GO" id="GO:0004640">
    <property type="term" value="F:phosphoribosylanthranilate isomerase activity"/>
    <property type="evidence" value="ECO:0007669"/>
    <property type="project" value="UniProtKB-UniRule"/>
</dbReference>
<dbReference type="GO" id="GO:0000162">
    <property type="term" value="P:L-tryptophan biosynthetic process"/>
    <property type="evidence" value="ECO:0007669"/>
    <property type="project" value="UniProtKB-UniRule"/>
</dbReference>
<dbReference type="CDD" id="cd00405">
    <property type="entry name" value="PRAI"/>
    <property type="match status" value="1"/>
</dbReference>
<dbReference type="FunFam" id="3.20.20.70:FF:000075">
    <property type="entry name" value="Tryptophan biosynthesis protein TRP1"/>
    <property type="match status" value="1"/>
</dbReference>
<dbReference type="Gene3D" id="3.20.20.70">
    <property type="entry name" value="Aldolase class I"/>
    <property type="match status" value="1"/>
</dbReference>
<dbReference type="HAMAP" id="MF_00135">
    <property type="entry name" value="PRAI"/>
    <property type="match status" value="1"/>
</dbReference>
<dbReference type="InterPro" id="IPR013785">
    <property type="entry name" value="Aldolase_TIM"/>
</dbReference>
<dbReference type="InterPro" id="IPR001240">
    <property type="entry name" value="PRAI_dom"/>
</dbReference>
<dbReference type="InterPro" id="IPR011060">
    <property type="entry name" value="RibuloseP-bd_barrel"/>
</dbReference>
<dbReference type="InterPro" id="IPR044643">
    <property type="entry name" value="TrpF_fam"/>
</dbReference>
<dbReference type="NCBIfam" id="NF002297">
    <property type="entry name" value="PRK01222.1-3"/>
    <property type="match status" value="1"/>
</dbReference>
<dbReference type="PANTHER" id="PTHR42894">
    <property type="entry name" value="N-(5'-PHOSPHORIBOSYL)ANTHRANILATE ISOMERASE"/>
    <property type="match status" value="1"/>
</dbReference>
<dbReference type="PANTHER" id="PTHR42894:SF1">
    <property type="entry name" value="N-(5'-PHOSPHORIBOSYL)ANTHRANILATE ISOMERASE"/>
    <property type="match status" value="1"/>
</dbReference>
<dbReference type="Pfam" id="PF00697">
    <property type="entry name" value="PRAI"/>
    <property type="match status" value="1"/>
</dbReference>
<dbReference type="SUPFAM" id="SSF51366">
    <property type="entry name" value="Ribulose-phoshate binding barrel"/>
    <property type="match status" value="1"/>
</dbReference>
<accession>A9VJW1</accession>
<evidence type="ECO:0000255" key="1">
    <source>
        <dbReference type="HAMAP-Rule" id="MF_00135"/>
    </source>
</evidence>
<organism>
    <name type="scientific">Bacillus mycoides (strain KBAB4)</name>
    <name type="common">Bacillus weihenstephanensis</name>
    <dbReference type="NCBI Taxonomy" id="315730"/>
    <lineage>
        <taxon>Bacteria</taxon>
        <taxon>Bacillati</taxon>
        <taxon>Bacillota</taxon>
        <taxon>Bacilli</taxon>
        <taxon>Bacillales</taxon>
        <taxon>Bacillaceae</taxon>
        <taxon>Bacillus</taxon>
        <taxon>Bacillus cereus group</taxon>
    </lineage>
</organism>
<protein>
    <recommendedName>
        <fullName evidence="1">N-(5'-phosphoribosyl)anthranilate isomerase</fullName>
        <shortName evidence="1">PRAI</shortName>
        <ecNumber evidence="1">5.3.1.24</ecNumber>
    </recommendedName>
</protein>
<name>TRPF_BACMK</name>
<sequence length="204" mass="22721">MKVKICGITDVETAKHACEYGADAIGFVFAESKRKITPGLAKEIIGEIPVHVFKVGVFVNESVEVIQKIAEECGLTHVQLHGDEDNHQIRRLNIPSIKAVGVALEKDIECAKKYDTDYLLFDSPKEKFHGGNGKTFSWELLAHMPNELREKTILAGGLNILNIEEAIRTVQPYMIDVSSGVETEGKKDLKKIKQFIKKAKECSK</sequence>
<comment type="catalytic activity">
    <reaction evidence="1">
        <text>N-(5-phospho-beta-D-ribosyl)anthranilate = 1-(2-carboxyphenylamino)-1-deoxy-D-ribulose 5-phosphate</text>
        <dbReference type="Rhea" id="RHEA:21540"/>
        <dbReference type="ChEBI" id="CHEBI:18277"/>
        <dbReference type="ChEBI" id="CHEBI:58613"/>
        <dbReference type="EC" id="5.3.1.24"/>
    </reaction>
</comment>
<comment type="pathway">
    <text evidence="1">Amino-acid biosynthesis; L-tryptophan biosynthesis; L-tryptophan from chorismate: step 3/5.</text>
</comment>
<comment type="similarity">
    <text evidence="1">Belongs to the TrpF family.</text>
</comment>
<feature type="chain" id="PRO_1000095911" description="N-(5'-phosphoribosyl)anthranilate isomerase">
    <location>
        <begin position="1"/>
        <end position="204"/>
    </location>
</feature>
<keyword id="KW-0028">Amino-acid biosynthesis</keyword>
<keyword id="KW-0057">Aromatic amino acid biosynthesis</keyword>
<keyword id="KW-0413">Isomerase</keyword>
<keyword id="KW-0822">Tryptophan biosynthesis</keyword>